<comment type="function">
    <text evidence="1">Catalyzes the dephosphorylation of undecaprenyl diphosphate (UPP). Confers resistance to bacitracin.</text>
</comment>
<comment type="catalytic activity">
    <reaction evidence="1">
        <text>di-trans,octa-cis-undecaprenyl diphosphate + H2O = di-trans,octa-cis-undecaprenyl phosphate + phosphate + H(+)</text>
        <dbReference type="Rhea" id="RHEA:28094"/>
        <dbReference type="ChEBI" id="CHEBI:15377"/>
        <dbReference type="ChEBI" id="CHEBI:15378"/>
        <dbReference type="ChEBI" id="CHEBI:43474"/>
        <dbReference type="ChEBI" id="CHEBI:58405"/>
        <dbReference type="ChEBI" id="CHEBI:60392"/>
        <dbReference type="EC" id="3.6.1.27"/>
    </reaction>
</comment>
<comment type="subcellular location">
    <subcellularLocation>
        <location evidence="1">Cell membrane</location>
        <topology evidence="1">Multi-pass membrane protein</topology>
    </subcellularLocation>
</comment>
<comment type="miscellaneous">
    <text>Bacitracin is thought to be involved in the inhibition of peptidoglycan synthesis by sequestering undecaprenyl diphosphate, thereby reducing the pool of lipid carrier available.</text>
</comment>
<comment type="similarity">
    <text evidence="1">Belongs to the UppP family.</text>
</comment>
<evidence type="ECO:0000255" key="1">
    <source>
        <dbReference type="HAMAP-Rule" id="MF_01006"/>
    </source>
</evidence>
<dbReference type="EC" id="3.6.1.27" evidence="1"/>
<dbReference type="EMBL" id="CP000387">
    <property type="protein sequence ID" value="ABN45334.1"/>
    <property type="molecule type" value="Genomic_DNA"/>
</dbReference>
<dbReference type="RefSeq" id="WP_011837466.1">
    <property type="nucleotide sequence ID" value="NC_009009.1"/>
</dbReference>
<dbReference type="RefSeq" id="YP_001035884.1">
    <property type="nucleotide sequence ID" value="NC_009009.1"/>
</dbReference>
<dbReference type="SMR" id="A3CQ79"/>
<dbReference type="STRING" id="388919.SSA_1959"/>
<dbReference type="KEGG" id="ssa:SSA_1959"/>
<dbReference type="PATRIC" id="fig|388919.9.peg.1858"/>
<dbReference type="eggNOG" id="COG1968">
    <property type="taxonomic scope" value="Bacteria"/>
</dbReference>
<dbReference type="HOGENOM" id="CLU_060296_2_0_9"/>
<dbReference type="OrthoDB" id="9808289at2"/>
<dbReference type="Proteomes" id="UP000002148">
    <property type="component" value="Chromosome"/>
</dbReference>
<dbReference type="GO" id="GO:0005886">
    <property type="term" value="C:plasma membrane"/>
    <property type="evidence" value="ECO:0007669"/>
    <property type="project" value="UniProtKB-SubCell"/>
</dbReference>
<dbReference type="GO" id="GO:0050380">
    <property type="term" value="F:undecaprenyl-diphosphatase activity"/>
    <property type="evidence" value="ECO:0007669"/>
    <property type="project" value="UniProtKB-UniRule"/>
</dbReference>
<dbReference type="GO" id="GO:0071555">
    <property type="term" value="P:cell wall organization"/>
    <property type="evidence" value="ECO:0007669"/>
    <property type="project" value="UniProtKB-KW"/>
</dbReference>
<dbReference type="GO" id="GO:0009252">
    <property type="term" value="P:peptidoglycan biosynthetic process"/>
    <property type="evidence" value="ECO:0007669"/>
    <property type="project" value="UniProtKB-KW"/>
</dbReference>
<dbReference type="GO" id="GO:0008360">
    <property type="term" value="P:regulation of cell shape"/>
    <property type="evidence" value="ECO:0007669"/>
    <property type="project" value="UniProtKB-KW"/>
</dbReference>
<dbReference type="GO" id="GO:0046677">
    <property type="term" value="P:response to antibiotic"/>
    <property type="evidence" value="ECO:0007669"/>
    <property type="project" value="UniProtKB-UniRule"/>
</dbReference>
<dbReference type="HAMAP" id="MF_01006">
    <property type="entry name" value="Undec_diphosphatase"/>
    <property type="match status" value="1"/>
</dbReference>
<dbReference type="InterPro" id="IPR003824">
    <property type="entry name" value="UppP"/>
</dbReference>
<dbReference type="NCBIfam" id="NF001391">
    <property type="entry name" value="PRK00281.1-5"/>
    <property type="match status" value="1"/>
</dbReference>
<dbReference type="PANTHER" id="PTHR30622">
    <property type="entry name" value="UNDECAPRENYL-DIPHOSPHATASE"/>
    <property type="match status" value="1"/>
</dbReference>
<dbReference type="PANTHER" id="PTHR30622:SF3">
    <property type="entry name" value="UNDECAPRENYL-DIPHOSPHATASE"/>
    <property type="match status" value="1"/>
</dbReference>
<dbReference type="Pfam" id="PF02673">
    <property type="entry name" value="BacA"/>
    <property type="match status" value="1"/>
</dbReference>
<gene>
    <name evidence="1" type="primary">uppP</name>
    <name type="synonym">bacA</name>
    <name type="ordered locus">SSA_1959</name>
</gene>
<proteinExistence type="inferred from homology"/>
<organism>
    <name type="scientific">Streptococcus sanguinis (strain SK36)</name>
    <dbReference type="NCBI Taxonomy" id="388919"/>
    <lineage>
        <taxon>Bacteria</taxon>
        <taxon>Bacillati</taxon>
        <taxon>Bacillota</taxon>
        <taxon>Bacilli</taxon>
        <taxon>Lactobacillales</taxon>
        <taxon>Streptococcaceae</taxon>
        <taxon>Streptococcus</taxon>
    </lineage>
</organism>
<accession>A3CQ79</accession>
<name>UPPP_STRSV</name>
<protein>
    <recommendedName>
        <fullName evidence="1">Undecaprenyl-diphosphatase</fullName>
        <ecNumber evidence="1">3.6.1.27</ecNumber>
    </recommendedName>
    <alternativeName>
        <fullName evidence="1">Bacitracin resistance protein</fullName>
    </alternativeName>
    <alternativeName>
        <fullName evidence="1">Undecaprenyl pyrophosphate phosphatase</fullName>
    </alternativeName>
</protein>
<sequence>MFIIEIFISIIYGIIEGITEWLPISSTGHLILIQDFIQFKNQSPAFMEMFNVVIQLGAILAVVVIYFDKLNPFKPGKSARQVQKTWQLWAKVVVAALPAAVIGLFLDDWFEAHFYNLVSVSVMLIVYGAAFIYLERREHEEPAVTDLASLPYKTALQIGLFQILALFPGTSRSGATIVGGLLNGVSRSVVTEFTFYLGIPIMFGASGWKILKFIKNGNGLGFGQIFLLLVAMGVAFGVSLVVIRFLTDYVKKHDFTIFGKYRIGLGGVLLVYAAIKALMG</sequence>
<feature type="chain" id="PRO_0000290773" description="Undecaprenyl-diphosphatase">
    <location>
        <begin position="1"/>
        <end position="280"/>
    </location>
</feature>
<feature type="transmembrane region" description="Helical" evidence="1">
    <location>
        <begin position="2"/>
        <end position="22"/>
    </location>
</feature>
<feature type="transmembrane region" description="Helical" evidence="1">
    <location>
        <begin position="45"/>
        <end position="65"/>
    </location>
</feature>
<feature type="transmembrane region" description="Helical" evidence="1">
    <location>
        <begin position="86"/>
        <end position="106"/>
    </location>
</feature>
<feature type="transmembrane region" description="Helical" evidence="1">
    <location>
        <begin position="114"/>
        <end position="134"/>
    </location>
</feature>
<feature type="transmembrane region" description="Helical" evidence="1">
    <location>
        <begin position="147"/>
        <end position="167"/>
    </location>
</feature>
<feature type="transmembrane region" description="Helical" evidence="1">
    <location>
        <begin position="188"/>
        <end position="208"/>
    </location>
</feature>
<feature type="transmembrane region" description="Helical" evidence="1">
    <location>
        <begin position="223"/>
        <end position="243"/>
    </location>
</feature>
<feature type="transmembrane region" description="Helical" evidence="1">
    <location>
        <begin position="255"/>
        <end position="275"/>
    </location>
</feature>
<keyword id="KW-0046">Antibiotic resistance</keyword>
<keyword id="KW-1003">Cell membrane</keyword>
<keyword id="KW-0133">Cell shape</keyword>
<keyword id="KW-0961">Cell wall biogenesis/degradation</keyword>
<keyword id="KW-0378">Hydrolase</keyword>
<keyword id="KW-0472">Membrane</keyword>
<keyword id="KW-0573">Peptidoglycan synthesis</keyword>
<keyword id="KW-1185">Reference proteome</keyword>
<keyword id="KW-0812">Transmembrane</keyword>
<keyword id="KW-1133">Transmembrane helix</keyword>
<reference key="1">
    <citation type="journal article" date="2007" name="J. Bacteriol.">
        <title>Genome of the opportunistic pathogen Streptococcus sanguinis.</title>
        <authorList>
            <person name="Xu P."/>
            <person name="Alves J.M."/>
            <person name="Kitten T."/>
            <person name="Brown A."/>
            <person name="Chen Z."/>
            <person name="Ozaki L.S."/>
            <person name="Manque P."/>
            <person name="Ge X."/>
            <person name="Serrano M.G."/>
            <person name="Puiu D."/>
            <person name="Hendricks S."/>
            <person name="Wang Y."/>
            <person name="Chaplin M.D."/>
            <person name="Akan D."/>
            <person name="Paik S."/>
            <person name="Peterson D.L."/>
            <person name="Macrina F.L."/>
            <person name="Buck G.A."/>
        </authorList>
    </citation>
    <scope>NUCLEOTIDE SEQUENCE [LARGE SCALE GENOMIC DNA]</scope>
    <source>
        <strain>SK36</strain>
    </source>
</reference>